<name>PSTC_PASMU</name>
<accession>Q9CNJ5</accession>
<proteinExistence type="inferred from homology"/>
<organism>
    <name type="scientific">Pasteurella multocida (strain Pm70)</name>
    <dbReference type="NCBI Taxonomy" id="272843"/>
    <lineage>
        <taxon>Bacteria</taxon>
        <taxon>Pseudomonadati</taxon>
        <taxon>Pseudomonadota</taxon>
        <taxon>Gammaproteobacteria</taxon>
        <taxon>Pasteurellales</taxon>
        <taxon>Pasteurellaceae</taxon>
        <taxon>Pasteurella</taxon>
    </lineage>
</organism>
<reference key="1">
    <citation type="journal article" date="2001" name="Proc. Natl. Acad. Sci. U.S.A.">
        <title>Complete genomic sequence of Pasteurella multocida Pm70.</title>
        <authorList>
            <person name="May B.J."/>
            <person name="Zhang Q."/>
            <person name="Li L.L."/>
            <person name="Paustian M.L."/>
            <person name="Whittam T.S."/>
            <person name="Kapur V."/>
        </authorList>
    </citation>
    <scope>NUCLEOTIDE SEQUENCE [LARGE SCALE GENOMIC DNA]</scope>
    <source>
        <strain>Pm70</strain>
    </source>
</reference>
<dbReference type="EMBL" id="AE004439">
    <property type="protein sequence ID" value="AAK02519.1"/>
    <property type="molecule type" value="Genomic_DNA"/>
</dbReference>
<dbReference type="RefSeq" id="WP_010906644.1">
    <property type="nucleotide sequence ID" value="NC_002663.1"/>
</dbReference>
<dbReference type="SMR" id="Q9CNJ5"/>
<dbReference type="STRING" id="272843.PM0435"/>
<dbReference type="EnsemblBacteria" id="AAK02519">
    <property type="protein sequence ID" value="AAK02519"/>
    <property type="gene ID" value="PM0435"/>
</dbReference>
<dbReference type="KEGG" id="pmu:PM0435"/>
<dbReference type="PATRIC" id="fig|272843.6.peg.447"/>
<dbReference type="HOGENOM" id="CLU_033621_1_3_6"/>
<dbReference type="OrthoDB" id="9785113at2"/>
<dbReference type="Proteomes" id="UP000000809">
    <property type="component" value="Chromosome"/>
</dbReference>
<dbReference type="GO" id="GO:0005886">
    <property type="term" value="C:plasma membrane"/>
    <property type="evidence" value="ECO:0007669"/>
    <property type="project" value="UniProtKB-SubCell"/>
</dbReference>
<dbReference type="GO" id="GO:0005315">
    <property type="term" value="F:phosphate transmembrane transporter activity"/>
    <property type="evidence" value="ECO:0007669"/>
    <property type="project" value="InterPro"/>
</dbReference>
<dbReference type="GO" id="GO:0006817">
    <property type="term" value="P:phosphate ion transport"/>
    <property type="evidence" value="ECO:0007669"/>
    <property type="project" value="UniProtKB-KW"/>
</dbReference>
<dbReference type="CDD" id="cd06261">
    <property type="entry name" value="TM_PBP2"/>
    <property type="match status" value="1"/>
</dbReference>
<dbReference type="Gene3D" id="1.10.3720.10">
    <property type="entry name" value="MetI-like"/>
    <property type="match status" value="1"/>
</dbReference>
<dbReference type="InterPro" id="IPR000515">
    <property type="entry name" value="MetI-like"/>
</dbReference>
<dbReference type="InterPro" id="IPR035906">
    <property type="entry name" value="MetI-like_sf"/>
</dbReference>
<dbReference type="InterPro" id="IPR011864">
    <property type="entry name" value="Phosphate_PstC"/>
</dbReference>
<dbReference type="InterPro" id="IPR051124">
    <property type="entry name" value="Phosphate_Transport_Permease"/>
</dbReference>
<dbReference type="NCBIfam" id="TIGR02138">
    <property type="entry name" value="phosphate_pstC"/>
    <property type="match status" value="1"/>
</dbReference>
<dbReference type="PANTHER" id="PTHR30425">
    <property type="entry name" value="PHOSPHATE TRANSPORT SYSTEM PERMEASE PROTEIN PST"/>
    <property type="match status" value="1"/>
</dbReference>
<dbReference type="PANTHER" id="PTHR30425:SF1">
    <property type="entry name" value="PHOSPHATE TRANSPORT SYSTEM PERMEASE PROTEIN PSTC"/>
    <property type="match status" value="1"/>
</dbReference>
<dbReference type="Pfam" id="PF00528">
    <property type="entry name" value="BPD_transp_1"/>
    <property type="match status" value="1"/>
</dbReference>
<dbReference type="SUPFAM" id="SSF161098">
    <property type="entry name" value="MetI-like"/>
    <property type="match status" value="1"/>
</dbReference>
<dbReference type="PROSITE" id="PS50928">
    <property type="entry name" value="ABC_TM1"/>
    <property type="match status" value="1"/>
</dbReference>
<protein>
    <recommendedName>
        <fullName>Phosphate transport system permease protein PstC</fullName>
    </recommendedName>
</protein>
<keyword id="KW-0997">Cell inner membrane</keyword>
<keyword id="KW-1003">Cell membrane</keyword>
<keyword id="KW-0472">Membrane</keyword>
<keyword id="KW-0592">Phosphate transport</keyword>
<keyword id="KW-1185">Reference proteome</keyword>
<keyword id="KW-0812">Transmembrane</keyword>
<keyword id="KW-1133">Transmembrane helix</keyword>
<keyword id="KW-0813">Transport</keyword>
<sequence length="320" mass="35405">MLRRKTQAETNRLNHHIIELLFRQTTRFFAIFVFLLLAAVMTSLVFGSWDSFSTFGFSFLWHNDWNPVQESYGAIIPIVGTLITSFLALIIAVPISFGIAIFLTELAPEWLRRPVGTAIEMLAAIPSIIYGMWGLFIFVPLFQEHIQPSLIEWFGDLPVFSYLFSGAPFGIGLFTAGLVLAIMIIPFIAAVMRDVFTIVPAILKESAYGLGSTTWEVMWKVVLPYTKTGVVGGIMLGLGRALGETMAVTFVIGNAFHLPESLFSPSTSIASAIANEFNEASGLQKSALMELGLILFLITTVVLSISRLLIMRIEKKEGRK</sequence>
<comment type="function">
    <text evidence="1">Part of the binding-protein-dependent transport system for phosphate; probably responsible for the translocation of the substrate across the membrane.</text>
</comment>
<comment type="subcellular location">
    <subcellularLocation>
        <location evidence="1">Cell inner membrane</location>
        <topology evidence="3">Multi-pass membrane protein</topology>
    </subcellularLocation>
</comment>
<comment type="similarity">
    <text evidence="4">Belongs to the binding-protein-dependent transport system permease family. CysTW subfamily.</text>
</comment>
<gene>
    <name type="primary">pstC</name>
    <name type="ordered locus">PM0435</name>
</gene>
<feature type="chain" id="PRO_0000060210" description="Phosphate transport system permease protein PstC">
    <location>
        <begin position="1"/>
        <end position="320"/>
    </location>
</feature>
<feature type="topological domain" description="Cytoplasmic" evidence="2">
    <location>
        <begin position="1"/>
        <end position="27"/>
    </location>
</feature>
<feature type="transmembrane region" description="Helical" evidence="3">
    <location>
        <begin position="28"/>
        <end position="50"/>
    </location>
</feature>
<feature type="topological domain" description="Periplasmic" evidence="2">
    <location>
        <begin position="51"/>
        <end position="80"/>
    </location>
</feature>
<feature type="transmembrane region" description="Helical" evidence="3">
    <location>
        <begin position="81"/>
        <end position="103"/>
    </location>
</feature>
<feature type="topological domain" description="Cytoplasmic" evidence="2">
    <location>
        <begin position="104"/>
        <end position="114"/>
    </location>
</feature>
<feature type="transmembrane region" description="Helical" evidence="3">
    <location>
        <begin position="115"/>
        <end position="137"/>
    </location>
</feature>
<feature type="topological domain" description="Periplasmic" evidence="2">
    <location>
        <begin position="138"/>
        <end position="168"/>
    </location>
</feature>
<feature type="transmembrane region" description="Helical" evidence="3">
    <location>
        <begin position="169"/>
        <end position="191"/>
    </location>
</feature>
<feature type="topological domain" description="Cytoplasmic" evidence="2">
    <location>
        <begin position="192"/>
        <end position="229"/>
    </location>
</feature>
<feature type="transmembrane region" description="Helical" evidence="3">
    <location>
        <begin position="230"/>
        <end position="252"/>
    </location>
</feature>
<feature type="topological domain" description="Periplasmic" evidence="2">
    <location>
        <begin position="253"/>
        <end position="287"/>
    </location>
</feature>
<feature type="transmembrane region" description="Helical" evidence="3">
    <location>
        <begin position="288"/>
        <end position="310"/>
    </location>
</feature>
<feature type="topological domain" description="Cytoplasmic" evidence="2">
    <location>
        <begin position="311"/>
        <end position="320"/>
    </location>
</feature>
<feature type="domain" description="ABC transmembrane type-1" evidence="3">
    <location>
        <begin position="78"/>
        <end position="306"/>
    </location>
</feature>
<evidence type="ECO:0000250" key="1"/>
<evidence type="ECO:0000255" key="2"/>
<evidence type="ECO:0000255" key="3">
    <source>
        <dbReference type="PROSITE-ProRule" id="PRU00441"/>
    </source>
</evidence>
<evidence type="ECO:0000305" key="4"/>